<gene>
    <name evidence="1" type="primary">metN2</name>
    <name type="ordered locus">SAUSA300_0796</name>
</gene>
<name>METN2_STAA3</name>
<accession>Q2FII2</accession>
<sequence>MIELKEVVKEYRTKNKEVLAVDHVNLSIRAGSIYGVIGFSGAGKSTLIRMFNHLEAPTSGEVIIDGDHIGQLSKNGLRAKRQKVSMIFQHFNLLWSRTVLKNIMFPLEIAGVPRRRAKQKALELVELVGLKGREKAYPSELSGGQKQRVGIARALANDPTVLLCDEATSALDPQTTDEILDLLLKIREQQNLTIVLITHEMHVIRRICDEVAVMESGKVIEQGPVTQVFENPQHTVTKRFVKDDLNDDFETSLTELEPLEKDAYIVRLVFAGSTTTEPIVSSLSTAYDIKINILEANIKNTKNGTVGFLVLHIPYISSVDFGKFEKELIERQVKMEVLRHG</sequence>
<evidence type="ECO:0000255" key="1">
    <source>
        <dbReference type="HAMAP-Rule" id="MF_01719"/>
    </source>
</evidence>
<feature type="chain" id="PRO_0000270404" description="Methionine import ATP-binding protein MetN 2">
    <location>
        <begin position="1"/>
        <end position="341"/>
    </location>
</feature>
<feature type="domain" description="ABC transporter" evidence="1">
    <location>
        <begin position="2"/>
        <end position="241"/>
    </location>
</feature>
<feature type="binding site" evidence="1">
    <location>
        <begin position="38"/>
        <end position="45"/>
    </location>
    <ligand>
        <name>ATP</name>
        <dbReference type="ChEBI" id="CHEBI:30616"/>
    </ligand>
</feature>
<organism>
    <name type="scientific">Staphylococcus aureus (strain USA300)</name>
    <dbReference type="NCBI Taxonomy" id="367830"/>
    <lineage>
        <taxon>Bacteria</taxon>
        <taxon>Bacillati</taxon>
        <taxon>Bacillota</taxon>
        <taxon>Bacilli</taxon>
        <taxon>Bacillales</taxon>
        <taxon>Staphylococcaceae</taxon>
        <taxon>Staphylococcus</taxon>
    </lineage>
</organism>
<dbReference type="EC" id="7.4.2.11" evidence="1"/>
<dbReference type="EMBL" id="CP000255">
    <property type="protein sequence ID" value="ABD21723.1"/>
    <property type="molecule type" value="Genomic_DNA"/>
</dbReference>
<dbReference type="RefSeq" id="WP_000571218.1">
    <property type="nucleotide sequence ID" value="NZ_CP027476.1"/>
</dbReference>
<dbReference type="SMR" id="Q2FII2"/>
<dbReference type="KEGG" id="saa:SAUSA300_0796"/>
<dbReference type="HOGENOM" id="CLU_000604_1_3_9"/>
<dbReference type="OMA" id="VIRKICH"/>
<dbReference type="Proteomes" id="UP000001939">
    <property type="component" value="Chromosome"/>
</dbReference>
<dbReference type="GO" id="GO:0005886">
    <property type="term" value="C:plasma membrane"/>
    <property type="evidence" value="ECO:0007669"/>
    <property type="project" value="UniProtKB-SubCell"/>
</dbReference>
<dbReference type="GO" id="GO:0033232">
    <property type="term" value="F:ABC-type D-methionine transporter activity"/>
    <property type="evidence" value="ECO:0007669"/>
    <property type="project" value="UniProtKB-EC"/>
</dbReference>
<dbReference type="GO" id="GO:0005524">
    <property type="term" value="F:ATP binding"/>
    <property type="evidence" value="ECO:0007669"/>
    <property type="project" value="UniProtKB-KW"/>
</dbReference>
<dbReference type="GO" id="GO:0016887">
    <property type="term" value="F:ATP hydrolysis activity"/>
    <property type="evidence" value="ECO:0007669"/>
    <property type="project" value="InterPro"/>
</dbReference>
<dbReference type="CDD" id="cd03258">
    <property type="entry name" value="ABC_MetN_methionine_transporter"/>
    <property type="match status" value="1"/>
</dbReference>
<dbReference type="FunFam" id="3.40.50.300:FF:000056">
    <property type="entry name" value="Cell division ATP-binding protein FtsE"/>
    <property type="match status" value="1"/>
</dbReference>
<dbReference type="Gene3D" id="3.30.70.260">
    <property type="match status" value="1"/>
</dbReference>
<dbReference type="Gene3D" id="3.40.50.300">
    <property type="entry name" value="P-loop containing nucleotide triphosphate hydrolases"/>
    <property type="match status" value="1"/>
</dbReference>
<dbReference type="InterPro" id="IPR003593">
    <property type="entry name" value="AAA+_ATPase"/>
</dbReference>
<dbReference type="InterPro" id="IPR003439">
    <property type="entry name" value="ABC_transporter-like_ATP-bd"/>
</dbReference>
<dbReference type="InterPro" id="IPR017871">
    <property type="entry name" value="ABC_transporter-like_CS"/>
</dbReference>
<dbReference type="InterPro" id="IPR045865">
    <property type="entry name" value="ACT-like_dom_sf"/>
</dbReference>
<dbReference type="InterPro" id="IPR041701">
    <property type="entry name" value="MetN_ABC"/>
</dbReference>
<dbReference type="InterPro" id="IPR050086">
    <property type="entry name" value="MetN_ABC_transporter-like"/>
</dbReference>
<dbReference type="InterPro" id="IPR018449">
    <property type="entry name" value="NIL_domain"/>
</dbReference>
<dbReference type="InterPro" id="IPR027417">
    <property type="entry name" value="P-loop_NTPase"/>
</dbReference>
<dbReference type="PANTHER" id="PTHR43166">
    <property type="entry name" value="AMINO ACID IMPORT ATP-BINDING PROTEIN"/>
    <property type="match status" value="1"/>
</dbReference>
<dbReference type="PANTHER" id="PTHR43166:SF36">
    <property type="entry name" value="METHIONINE IMPORT ATP-BINDING PROTEIN METN 2"/>
    <property type="match status" value="1"/>
</dbReference>
<dbReference type="Pfam" id="PF00005">
    <property type="entry name" value="ABC_tran"/>
    <property type="match status" value="1"/>
</dbReference>
<dbReference type="Pfam" id="PF09383">
    <property type="entry name" value="NIL"/>
    <property type="match status" value="1"/>
</dbReference>
<dbReference type="SMART" id="SM00382">
    <property type="entry name" value="AAA"/>
    <property type="match status" value="1"/>
</dbReference>
<dbReference type="SMART" id="SM00930">
    <property type="entry name" value="NIL"/>
    <property type="match status" value="1"/>
</dbReference>
<dbReference type="SUPFAM" id="SSF55021">
    <property type="entry name" value="ACT-like"/>
    <property type="match status" value="1"/>
</dbReference>
<dbReference type="SUPFAM" id="SSF52540">
    <property type="entry name" value="P-loop containing nucleoside triphosphate hydrolases"/>
    <property type="match status" value="1"/>
</dbReference>
<dbReference type="PROSITE" id="PS00211">
    <property type="entry name" value="ABC_TRANSPORTER_1"/>
    <property type="match status" value="1"/>
</dbReference>
<dbReference type="PROSITE" id="PS50893">
    <property type="entry name" value="ABC_TRANSPORTER_2"/>
    <property type="match status" value="1"/>
</dbReference>
<dbReference type="PROSITE" id="PS51264">
    <property type="entry name" value="METN"/>
    <property type="match status" value="1"/>
</dbReference>
<keyword id="KW-0029">Amino-acid transport</keyword>
<keyword id="KW-0067">ATP-binding</keyword>
<keyword id="KW-1003">Cell membrane</keyword>
<keyword id="KW-0472">Membrane</keyword>
<keyword id="KW-0547">Nucleotide-binding</keyword>
<keyword id="KW-1278">Translocase</keyword>
<keyword id="KW-0813">Transport</keyword>
<protein>
    <recommendedName>
        <fullName evidence="1">Methionine import ATP-binding protein MetN 2</fullName>
        <ecNumber evidence="1">7.4.2.11</ecNumber>
    </recommendedName>
</protein>
<comment type="function">
    <text evidence="1">Part of the ABC transporter complex MetNIQ involved in methionine import. Responsible for energy coupling to the transport system.</text>
</comment>
<comment type="catalytic activity">
    <reaction evidence="1">
        <text>L-methionine(out) + ATP + H2O = L-methionine(in) + ADP + phosphate + H(+)</text>
        <dbReference type="Rhea" id="RHEA:29779"/>
        <dbReference type="ChEBI" id="CHEBI:15377"/>
        <dbReference type="ChEBI" id="CHEBI:15378"/>
        <dbReference type="ChEBI" id="CHEBI:30616"/>
        <dbReference type="ChEBI" id="CHEBI:43474"/>
        <dbReference type="ChEBI" id="CHEBI:57844"/>
        <dbReference type="ChEBI" id="CHEBI:456216"/>
        <dbReference type="EC" id="7.4.2.11"/>
    </reaction>
</comment>
<comment type="catalytic activity">
    <reaction evidence="1">
        <text>D-methionine(out) + ATP + H2O = D-methionine(in) + ADP + phosphate + H(+)</text>
        <dbReference type="Rhea" id="RHEA:29767"/>
        <dbReference type="ChEBI" id="CHEBI:15377"/>
        <dbReference type="ChEBI" id="CHEBI:15378"/>
        <dbReference type="ChEBI" id="CHEBI:30616"/>
        <dbReference type="ChEBI" id="CHEBI:43474"/>
        <dbReference type="ChEBI" id="CHEBI:57932"/>
        <dbReference type="ChEBI" id="CHEBI:456216"/>
        <dbReference type="EC" id="7.4.2.11"/>
    </reaction>
</comment>
<comment type="subunit">
    <text evidence="1">The complex is composed of two ATP-binding proteins (MetN), two transmembrane proteins (MetI) and a solute-binding protein (MetQ).</text>
</comment>
<comment type="subcellular location">
    <subcellularLocation>
        <location evidence="1">Cell membrane</location>
        <topology evidence="1">Peripheral membrane protein</topology>
    </subcellularLocation>
</comment>
<comment type="similarity">
    <text evidence="1">Belongs to the ABC transporter superfamily. Methionine importer (TC 3.A.1.24) family.</text>
</comment>
<reference key="1">
    <citation type="journal article" date="2006" name="Lancet">
        <title>Complete genome sequence of USA300, an epidemic clone of community-acquired meticillin-resistant Staphylococcus aureus.</title>
        <authorList>
            <person name="Diep B.A."/>
            <person name="Gill S.R."/>
            <person name="Chang R.F."/>
            <person name="Phan T.H."/>
            <person name="Chen J.H."/>
            <person name="Davidson M.G."/>
            <person name="Lin F."/>
            <person name="Lin J."/>
            <person name="Carleton H.A."/>
            <person name="Mongodin E.F."/>
            <person name="Sensabaugh G.F."/>
            <person name="Perdreau-Remington F."/>
        </authorList>
    </citation>
    <scope>NUCLEOTIDE SEQUENCE [LARGE SCALE GENOMIC DNA]</scope>
    <source>
        <strain>USA300</strain>
    </source>
</reference>
<proteinExistence type="inferred from homology"/>